<reference key="1">
    <citation type="journal article" date="2005" name="Nature">
        <title>Generation and annotation of the DNA sequences of human chromosomes 2 and 4.</title>
        <authorList>
            <person name="Hillier L.W."/>
            <person name="Graves T.A."/>
            <person name="Fulton R.S."/>
            <person name="Fulton L.A."/>
            <person name="Pepin K.H."/>
            <person name="Minx P."/>
            <person name="Wagner-McPherson C."/>
            <person name="Layman D."/>
            <person name="Wylie K."/>
            <person name="Sekhon M."/>
            <person name="Becker M.C."/>
            <person name="Fewell G.A."/>
            <person name="Delehaunty K.D."/>
            <person name="Miner T.L."/>
            <person name="Nash W.E."/>
            <person name="Kremitzki C."/>
            <person name="Oddy L."/>
            <person name="Du H."/>
            <person name="Sun H."/>
            <person name="Bradshaw-Cordum H."/>
            <person name="Ali J."/>
            <person name="Carter J."/>
            <person name="Cordes M."/>
            <person name="Harris A."/>
            <person name="Isak A."/>
            <person name="van Brunt A."/>
            <person name="Nguyen C."/>
            <person name="Du F."/>
            <person name="Courtney L."/>
            <person name="Kalicki J."/>
            <person name="Ozersky P."/>
            <person name="Abbott S."/>
            <person name="Armstrong J."/>
            <person name="Belter E.A."/>
            <person name="Caruso L."/>
            <person name="Cedroni M."/>
            <person name="Cotton M."/>
            <person name="Davidson T."/>
            <person name="Desai A."/>
            <person name="Elliott G."/>
            <person name="Erb T."/>
            <person name="Fronick C."/>
            <person name="Gaige T."/>
            <person name="Haakenson W."/>
            <person name="Haglund K."/>
            <person name="Holmes A."/>
            <person name="Harkins R."/>
            <person name="Kim K."/>
            <person name="Kruchowski S.S."/>
            <person name="Strong C.M."/>
            <person name="Grewal N."/>
            <person name="Goyea E."/>
            <person name="Hou S."/>
            <person name="Levy A."/>
            <person name="Martinka S."/>
            <person name="Mead K."/>
            <person name="McLellan M.D."/>
            <person name="Meyer R."/>
            <person name="Randall-Maher J."/>
            <person name="Tomlinson C."/>
            <person name="Dauphin-Kohlberg S."/>
            <person name="Kozlowicz-Reilly A."/>
            <person name="Shah N."/>
            <person name="Swearengen-Shahid S."/>
            <person name="Snider J."/>
            <person name="Strong J.T."/>
            <person name="Thompson J."/>
            <person name="Yoakum M."/>
            <person name="Leonard S."/>
            <person name="Pearman C."/>
            <person name="Trani L."/>
            <person name="Radionenko M."/>
            <person name="Waligorski J.E."/>
            <person name="Wang C."/>
            <person name="Rock S.M."/>
            <person name="Tin-Wollam A.-M."/>
            <person name="Maupin R."/>
            <person name="Latreille P."/>
            <person name="Wendl M.C."/>
            <person name="Yang S.-P."/>
            <person name="Pohl C."/>
            <person name="Wallis J.W."/>
            <person name="Spieth J."/>
            <person name="Bieri T.A."/>
            <person name="Berkowicz N."/>
            <person name="Nelson J.O."/>
            <person name="Osborne J."/>
            <person name="Ding L."/>
            <person name="Meyer R."/>
            <person name="Sabo A."/>
            <person name="Shotland Y."/>
            <person name="Sinha P."/>
            <person name="Wohldmann P.E."/>
            <person name="Cook L.L."/>
            <person name="Hickenbotham M.T."/>
            <person name="Eldred J."/>
            <person name="Williams D."/>
            <person name="Jones T.A."/>
            <person name="She X."/>
            <person name="Ciccarelli F.D."/>
            <person name="Izaurralde E."/>
            <person name="Taylor J."/>
            <person name="Schmutz J."/>
            <person name="Myers R.M."/>
            <person name="Cox D.R."/>
            <person name="Huang X."/>
            <person name="McPherson J.D."/>
            <person name="Mardis E.R."/>
            <person name="Clifton S.W."/>
            <person name="Warren W.C."/>
            <person name="Chinwalla A.T."/>
            <person name="Eddy S.R."/>
            <person name="Marra M.A."/>
            <person name="Ovcharenko I."/>
            <person name="Furey T.S."/>
            <person name="Miller W."/>
            <person name="Eichler E.E."/>
            <person name="Bork P."/>
            <person name="Suyama M."/>
            <person name="Torrents D."/>
            <person name="Waterston R.H."/>
            <person name="Wilson R.K."/>
        </authorList>
    </citation>
    <scope>NUCLEOTIDE SEQUENCE [LARGE SCALE GENOMIC DNA]</scope>
</reference>
<reference key="2">
    <citation type="journal article" date="2004" name="Proc. Natl. Acad. Sci. U.S.A.">
        <title>The extracellular matrix gene Frem1 is essential for the normal adhesion of the embryonic epidermis.</title>
        <authorList>
            <person name="Smyth I."/>
            <person name="Du X."/>
            <person name="Taylor M.S."/>
            <person name="Justice M.J."/>
            <person name="Beutler B."/>
            <person name="Jackson I.J."/>
        </authorList>
    </citation>
    <scope>IDENTIFICATION</scope>
</reference>
<feature type="signal peptide" evidence="2">
    <location>
        <begin position="1"/>
        <end position="30"/>
    </location>
</feature>
<feature type="chain" id="PRO_0000010127" description="FRAS1-related extracellular matrix protein 3">
    <location>
        <begin position="31"/>
        <end position="2139"/>
    </location>
</feature>
<feature type="repeat" description="CSPG 1" evidence="3">
    <location>
        <begin position="306"/>
        <end position="409"/>
    </location>
</feature>
<feature type="repeat" description="CSPG 2" evidence="3">
    <location>
        <begin position="432"/>
        <end position="522"/>
    </location>
</feature>
<feature type="repeat" description="CSPG 3" evidence="3">
    <location>
        <begin position="543"/>
        <end position="677"/>
    </location>
</feature>
<feature type="repeat" description="CSPG 4" evidence="3">
    <location>
        <begin position="702"/>
        <end position="807"/>
    </location>
</feature>
<feature type="repeat" description="CSPG 5" evidence="3">
    <location>
        <begin position="828"/>
        <end position="920"/>
    </location>
</feature>
<feature type="repeat" description="CSPG 6" evidence="3">
    <location>
        <begin position="948"/>
        <end position="1040"/>
    </location>
</feature>
<feature type="repeat" description="CSPG 7" evidence="3">
    <location>
        <begin position="1069"/>
        <end position="1171"/>
    </location>
</feature>
<feature type="repeat" description="CSPG 8" evidence="3">
    <location>
        <begin position="1192"/>
        <end position="1285"/>
    </location>
</feature>
<feature type="repeat" description="CSPG 9" evidence="3">
    <location>
        <begin position="1306"/>
        <end position="1404"/>
    </location>
</feature>
<feature type="repeat" description="CSPG 10" evidence="3">
    <location>
        <begin position="1425"/>
        <end position="1516"/>
    </location>
</feature>
<feature type="repeat" description="CSPG 11" evidence="3">
    <location>
        <begin position="1536"/>
        <end position="1625"/>
    </location>
</feature>
<feature type="repeat" description="CSPG 12" evidence="3">
    <location>
        <begin position="1659"/>
        <end position="1756"/>
    </location>
</feature>
<feature type="domain" description="Calx-beta 1">
    <location>
        <begin position="1764"/>
        <end position="1862"/>
    </location>
</feature>
<feature type="domain" description="Calx-beta 2">
    <location>
        <begin position="1875"/>
        <end position="1985"/>
    </location>
</feature>
<feature type="domain" description="Calx-beta 3">
    <location>
        <begin position="2000"/>
        <end position="2106"/>
    </location>
</feature>
<feature type="glycosylation site" description="N-linked (GlcNAc...) asparagine" evidence="2">
    <location>
        <position position="846"/>
    </location>
</feature>
<feature type="glycosylation site" description="N-linked (GlcNAc...) asparagine" evidence="2">
    <location>
        <position position="1368"/>
    </location>
</feature>
<feature type="glycosylation site" description="N-linked (GlcNAc...) asparagine" evidence="2">
    <location>
        <position position="1374"/>
    </location>
</feature>
<feature type="glycosylation site" description="N-linked (GlcNAc...) asparagine" evidence="2">
    <location>
        <position position="1588"/>
    </location>
</feature>
<feature type="sequence variant" id="VAR_055819" description="In dbSNP:rs4478130.">
    <original>D</original>
    <variation>N</variation>
    <location>
        <position position="412"/>
    </location>
</feature>
<feature type="sequence variant" id="VAR_059291" description="In dbSNP:rs184496.">
    <original>D</original>
    <variation>N</variation>
    <location>
        <position position="417"/>
    </location>
</feature>
<evidence type="ECO:0000250" key="1"/>
<evidence type="ECO:0000255" key="2"/>
<evidence type="ECO:0000255" key="3">
    <source>
        <dbReference type="PROSITE-ProRule" id="PRU01201"/>
    </source>
</evidence>
<evidence type="ECO:0000305" key="4"/>
<comment type="function">
    <text evidence="1">Extracellular matrix protein which may play a role in cell adhesion.</text>
</comment>
<comment type="subcellular location">
    <subcellularLocation>
        <location evidence="1">Secreted</location>
        <location evidence="1">Extracellular space</location>
        <location evidence="1">Extracellular matrix</location>
    </subcellularLocation>
</comment>
<comment type="domain">
    <text evidence="1">The Calx-beta domains bind calcium with high affinity and undergo a major conformational shift upon binding.</text>
</comment>
<comment type="similarity">
    <text evidence="4">Belongs to the FRAS1 family.</text>
</comment>
<name>FREM3_HUMAN</name>
<sequence>MAGASRHPTGTPRQLLVALACLLLSRPALQGRASSLGTEPDPALYLPARGALDGTRPDGPSVLIANPGLRVPLGRSLWLDPLRDLVIGVQPGDRCEVTVLDALPRLKGALSPRRFPCTFGPRQVQYTHFGSHSPGRARVLLQLRYDAPTHTLVLPFTLAVDLVFSQLELVTRNRPLVVEKLRSWSRAIDRRVLDFASLKSGATATRRCRLTPLPHEDGPLPKYGRLVDAVGAPLPRGKGVDCEAFLRAGVRYQHTATSSPNRDYVPMMVELLGPEGQDAGSAGVLVREHFQLLVRIRGGAENTPPRPSFMATMMMEVDPLVLTALTPDALAAEDVESDPGDLVFNILNAPTHPPGHPGQQGYVVSTDDPLGLPVSFFTQQELRELKIAYQPPAENSHGERLFQLELEVVDGDGAASDPFAFMVTVKSMNTLVPVASHNRGLVLFEGQSRPLSSTHSIPISDKDNLEEVKMAAVRGLRHGQLVVFGAPAGCKYFTPADLAAGRVVYQHDGSNTYSDNIIFRMEDGHHQVDFLFPLTILPVDDEPPMVNTNTGLSLTEGQVVQISPFVLSATDIDSEDSTIHFVLENQPLKGNEEEPQWELAPGSSHSGHYLGDLLLQQAELPLSTEDEDWHYMEKEGLYEKVVTEWLQRDIMEGRLFYRHLGPHSPQSVMVQLAFHVQDDHDPPNLSKQHIFTIKVQPVDILSPQLYPGTTLEMTVQEYQLTHFQKNFLRYIDQDSDDQNLWYTLLTLPTDTDGNHQVRAGEIVLTDSPDTLIMHFTQAQVNQHKVAYQPPQKLGIAPRVVQFTYQVEDAAGNSVPGTFTLFLQPVDNQPPEVTNRGFAILEGGSFNLSSNELHVTDPDTDIDQIVFILVRGPQHGHLQYFKRCMVPGESFMQADVINGSVSYQHGRDQTTTSDTFHLEVSDGVHHIPITIPISVHPNVANRSPRISLRSSSLLDVSIDVLENKATEITMGVIHGKRKDVGDLMLSFIVKDSPKLGTILVNGLPTERFTQEDLINGRVAYAHTAGEVGFQKQHDAFSLILSKDSYQWVVGNSIIEKVQVQVTVLPVDNVGPKVFVGESFIVYEGEKNSLTLQHLHVEDVDTHQDELLCTVTSQPASGYLEKIASAPGSKMSQSGSPISAFSLRDIQVRHINYVQSIHKGVEPQEDQFTFYCSDGINFSPNVFFPIIILPTNDEQPKLFAHEFKVLEGMSLVIDTQLLNGADADLPPNELHFQLTALPRHGRIIQQLATGSQPIHSFTLKEIQEASTIVYEHDDSETKEDSFEVWLSDGKHTTHRKVPIVVTLVDDETPHLTVNNGLKVEKGHSEIITNRILKATDLDSDDKSLSFVLHSGPQQGLLQRLRKPRGEVRNNLTLGMNFTQDEINRGLICYIHTGQEGIVDIIKFDVTDGVNTLTDHYFYVTIGNLDSVFPEVISKRITLIEGARVTLTNNLLTNSDINSSDEHHFSITRAPSLGHLESSDYAGEPIASFTQLQLASNKISYVHTSNDEKKMDSFEFQVIGELYPVFRTFRIFITDVDNKKPILTIHRLTLQKEDSQLITLLELTVEDSDTPDDLILFTITQVPMHGKILYNGSRPVTTFTKQDLNKNLISYKHDGSETTEDSFSLTVTDGTHTDFYVLPDTALATHKPQVMRVQIRSLDNRLPQITTNRGAPALKRLHTGHMGFLITSKSLKAEDQDSPHRLLKYKVTRGPEHGFIIKTGLGNQSTRVFTQADIDEMKISYVLNEGSNASKDIFYFSVEDNGGNKLTNQPFHLNWAWICLEKEYYIVDEDSTFLEVTLTRRGYLGETSFISIGTKDETAKKDKDFKWKTNKQIQFNPGQTTATWRVRIIPDNEYETSETFQIILSEPLMAVLEFPEMATVEIVDPGDESTVYIPEAEYKIEEDIGELLIPVRRSGDASQELIVICSTRQGSATGTISSTVLFSDYISRPEDHTSILHFDKNETQKTCQVLIIDDSLYEEEESFSVSLRLPVGGQLGARFPTTKVTILADRYDEPVLHFGDAEYHVNESARYVEVCVWRRGTDLSQPSSIAVRSRKSEQESAEAGTDYVGISRNLDFAPGVRMQTFQVTILDDLGQPTLEGPEKFELLLQMPMGAVLGEPNKTTIFIEDTITDCKQSACSSFD</sequence>
<protein>
    <recommendedName>
        <fullName>FRAS1-related extracellular matrix protein 3</fullName>
    </recommendedName>
</protein>
<organism>
    <name type="scientific">Homo sapiens</name>
    <name type="common">Human</name>
    <dbReference type="NCBI Taxonomy" id="9606"/>
    <lineage>
        <taxon>Eukaryota</taxon>
        <taxon>Metazoa</taxon>
        <taxon>Chordata</taxon>
        <taxon>Craniata</taxon>
        <taxon>Vertebrata</taxon>
        <taxon>Euteleostomi</taxon>
        <taxon>Mammalia</taxon>
        <taxon>Eutheria</taxon>
        <taxon>Euarchontoglires</taxon>
        <taxon>Primates</taxon>
        <taxon>Haplorrhini</taxon>
        <taxon>Catarrhini</taxon>
        <taxon>Hominidae</taxon>
        <taxon>Homo</taxon>
    </lineage>
</organism>
<dbReference type="EMBL" id="AC139713">
    <property type="status" value="NOT_ANNOTATED_CDS"/>
    <property type="molecule type" value="Genomic_DNA"/>
</dbReference>
<dbReference type="CCDS" id="CCDS54808.1"/>
<dbReference type="RefSeq" id="NP_001161707.1">
    <property type="nucleotide sequence ID" value="NM_001168235.2"/>
</dbReference>
<dbReference type="BioGRID" id="127932">
    <property type="interactions" value="3"/>
</dbReference>
<dbReference type="FunCoup" id="P0C091">
    <property type="interactions" value="11"/>
</dbReference>
<dbReference type="IntAct" id="P0C091">
    <property type="interactions" value="2"/>
</dbReference>
<dbReference type="STRING" id="9606.ENSP00000332886"/>
<dbReference type="GlyCosmos" id="P0C091">
    <property type="glycosylation" value="4 sites, No reported glycans"/>
</dbReference>
<dbReference type="GlyGen" id="P0C091">
    <property type="glycosylation" value="5 sites"/>
</dbReference>
<dbReference type="iPTMnet" id="P0C091"/>
<dbReference type="PhosphoSitePlus" id="P0C091"/>
<dbReference type="BioMuta" id="FREM3"/>
<dbReference type="DMDM" id="357528797"/>
<dbReference type="jPOST" id="P0C091"/>
<dbReference type="MassIVE" id="P0C091"/>
<dbReference type="PaxDb" id="9606-ENSP00000332886"/>
<dbReference type="PeptideAtlas" id="P0C091"/>
<dbReference type="ProteomicsDB" id="52290"/>
<dbReference type="Antibodypedia" id="64705">
    <property type="antibodies" value="5 antibodies from 5 providers"/>
</dbReference>
<dbReference type="DNASU" id="166752"/>
<dbReference type="Ensembl" id="ENST00000329798.5">
    <property type="protein sequence ID" value="ENSP00000332886.5"/>
    <property type="gene ID" value="ENSG00000183090.5"/>
</dbReference>
<dbReference type="GeneID" id="166752"/>
<dbReference type="KEGG" id="hsa:166752"/>
<dbReference type="MANE-Select" id="ENST00000329798.5">
    <property type="protein sequence ID" value="ENSP00000332886.5"/>
    <property type="RefSeq nucleotide sequence ID" value="NM_001168235.2"/>
    <property type="RefSeq protein sequence ID" value="NP_001161707.1"/>
</dbReference>
<dbReference type="UCSC" id="uc021xsj.2">
    <property type="organism name" value="human"/>
</dbReference>
<dbReference type="AGR" id="HGNC:25172"/>
<dbReference type="CTD" id="166752"/>
<dbReference type="DisGeNET" id="166752"/>
<dbReference type="GeneCards" id="FREM3"/>
<dbReference type="HGNC" id="HGNC:25172">
    <property type="gene designation" value="FREM3"/>
</dbReference>
<dbReference type="HPA" id="ENSG00000183090">
    <property type="expression patterns" value="Tissue enhanced (brain)"/>
</dbReference>
<dbReference type="MIM" id="608946">
    <property type="type" value="gene"/>
</dbReference>
<dbReference type="neXtProt" id="NX_P0C091"/>
<dbReference type="OpenTargets" id="ENSG00000183090"/>
<dbReference type="VEuPathDB" id="HostDB:ENSG00000183090"/>
<dbReference type="eggNOG" id="KOG1306">
    <property type="taxonomic scope" value="Eukaryota"/>
</dbReference>
<dbReference type="eggNOG" id="KOG3597">
    <property type="taxonomic scope" value="Eukaryota"/>
</dbReference>
<dbReference type="GeneTree" id="ENSGT00940000162501"/>
<dbReference type="HOGENOM" id="CLU_001041_1_0_1"/>
<dbReference type="InParanoid" id="P0C091"/>
<dbReference type="OMA" id="FRTFRIF"/>
<dbReference type="OrthoDB" id="430044at2759"/>
<dbReference type="PAN-GO" id="P0C091">
    <property type="GO annotations" value="2 GO annotations based on evolutionary models"/>
</dbReference>
<dbReference type="PhylomeDB" id="P0C091"/>
<dbReference type="TreeFam" id="TF316876"/>
<dbReference type="PathwayCommons" id="P0C091"/>
<dbReference type="SignaLink" id="P0C091"/>
<dbReference type="BioGRID-ORCS" id="166752">
    <property type="hits" value="14 hits in 1148 CRISPR screens"/>
</dbReference>
<dbReference type="GenomeRNAi" id="166752"/>
<dbReference type="Pharos" id="P0C091">
    <property type="development level" value="Tdark"/>
</dbReference>
<dbReference type="PRO" id="PR:P0C091"/>
<dbReference type="Proteomes" id="UP000005640">
    <property type="component" value="Chromosome 4"/>
</dbReference>
<dbReference type="RNAct" id="P0C091">
    <property type="molecule type" value="protein"/>
</dbReference>
<dbReference type="Bgee" id="ENSG00000183090">
    <property type="expression patterns" value="Expressed in male germ line stem cell (sensu Vertebrata) in testis and 83 other cell types or tissues"/>
</dbReference>
<dbReference type="GO" id="GO:0005604">
    <property type="term" value="C:basement membrane"/>
    <property type="evidence" value="ECO:0000250"/>
    <property type="project" value="BHF-UCL"/>
</dbReference>
<dbReference type="GO" id="GO:0062023">
    <property type="term" value="C:collagen-containing extracellular matrix"/>
    <property type="evidence" value="ECO:0000318"/>
    <property type="project" value="GO_Central"/>
</dbReference>
<dbReference type="GO" id="GO:0005615">
    <property type="term" value="C:extracellular space"/>
    <property type="evidence" value="ECO:0007005"/>
    <property type="project" value="UniProtKB"/>
</dbReference>
<dbReference type="GO" id="GO:0016020">
    <property type="term" value="C:membrane"/>
    <property type="evidence" value="ECO:0007669"/>
    <property type="project" value="InterPro"/>
</dbReference>
<dbReference type="GO" id="GO:0046872">
    <property type="term" value="F:metal ion binding"/>
    <property type="evidence" value="ECO:0007669"/>
    <property type="project" value="UniProtKB-KW"/>
</dbReference>
<dbReference type="GO" id="GO:0009653">
    <property type="term" value="P:anatomical structure morphogenesis"/>
    <property type="evidence" value="ECO:0000318"/>
    <property type="project" value="GO_Central"/>
</dbReference>
<dbReference type="GO" id="GO:0007155">
    <property type="term" value="P:cell adhesion"/>
    <property type="evidence" value="ECO:0000303"/>
    <property type="project" value="BHF-UCL"/>
</dbReference>
<dbReference type="GO" id="GO:0007154">
    <property type="term" value="P:cell communication"/>
    <property type="evidence" value="ECO:0007669"/>
    <property type="project" value="InterPro"/>
</dbReference>
<dbReference type="FunFam" id="2.60.40.2030:FF:000005">
    <property type="entry name" value="Extracellular matrix protein FRAS1 isoform 1"/>
    <property type="match status" value="1"/>
</dbReference>
<dbReference type="FunFam" id="2.60.40.2030:FF:000008">
    <property type="entry name" value="FRAS1-related extracellular matrix protein 2"/>
    <property type="match status" value="1"/>
</dbReference>
<dbReference type="FunFam" id="2.60.40.2030:FF:000011">
    <property type="entry name" value="Fras1-related extracellular matrix protein 2"/>
    <property type="match status" value="1"/>
</dbReference>
<dbReference type="Gene3D" id="2.60.40.2030">
    <property type="match status" value="3"/>
</dbReference>
<dbReference type="InterPro" id="IPR038081">
    <property type="entry name" value="CalX-like_sf"/>
</dbReference>
<dbReference type="InterPro" id="IPR003644">
    <property type="entry name" value="Calx_beta"/>
</dbReference>
<dbReference type="InterPro" id="IPR039005">
    <property type="entry name" value="CSPG_rpt"/>
</dbReference>
<dbReference type="InterPro" id="IPR045658">
    <property type="entry name" value="FRAS1-rel_N"/>
</dbReference>
<dbReference type="InterPro" id="IPR051561">
    <property type="entry name" value="FRAS1_ECM"/>
</dbReference>
<dbReference type="PANTHER" id="PTHR45739:SF5">
    <property type="entry name" value="FRAS1-RELATED EXTRACELLULAR MATRIX PROTEIN 3"/>
    <property type="match status" value="1"/>
</dbReference>
<dbReference type="PANTHER" id="PTHR45739">
    <property type="entry name" value="MATRIX PROTEIN, PUTATIVE-RELATED"/>
    <property type="match status" value="1"/>
</dbReference>
<dbReference type="Pfam" id="PF16184">
    <property type="entry name" value="Cadherin_3"/>
    <property type="match status" value="11"/>
</dbReference>
<dbReference type="Pfam" id="PF03160">
    <property type="entry name" value="Calx-beta"/>
    <property type="match status" value="3"/>
</dbReference>
<dbReference type="Pfam" id="PF19309">
    <property type="entry name" value="Frem_N"/>
    <property type="match status" value="1"/>
</dbReference>
<dbReference type="SMART" id="SM00237">
    <property type="entry name" value="Calx_beta"/>
    <property type="match status" value="3"/>
</dbReference>
<dbReference type="SUPFAM" id="SSF141072">
    <property type="entry name" value="CalX-like"/>
    <property type="match status" value="3"/>
</dbReference>
<dbReference type="PROSITE" id="PS51854">
    <property type="entry name" value="CSPG"/>
    <property type="match status" value="12"/>
</dbReference>
<accession>P0C091</accession>
<proteinExistence type="evidence at protein level"/>
<keyword id="KW-0106">Calcium</keyword>
<keyword id="KW-0130">Cell adhesion</keyword>
<keyword id="KW-0272">Extracellular matrix</keyword>
<keyword id="KW-0325">Glycoprotein</keyword>
<keyword id="KW-0479">Metal-binding</keyword>
<keyword id="KW-1267">Proteomics identification</keyword>
<keyword id="KW-1185">Reference proteome</keyword>
<keyword id="KW-0677">Repeat</keyword>
<keyword id="KW-0964">Secreted</keyword>
<keyword id="KW-0732">Signal</keyword>
<gene>
    <name type="primary">FREM3</name>
</gene>